<accession>Q7VKU5</accession>
<dbReference type="EC" id="1.3.1.-" evidence="1"/>
<dbReference type="EMBL" id="AE017143">
    <property type="protein sequence ID" value="AAP96524.1"/>
    <property type="molecule type" value="Genomic_DNA"/>
</dbReference>
<dbReference type="RefSeq" id="WP_010945553.1">
    <property type="nucleotide sequence ID" value="NC_002940.2"/>
</dbReference>
<dbReference type="SMR" id="Q7VKU5"/>
<dbReference type="STRING" id="233412.HD_1770"/>
<dbReference type="KEGG" id="hdu:HD_1770"/>
<dbReference type="eggNOG" id="COG0042">
    <property type="taxonomic scope" value="Bacteria"/>
</dbReference>
<dbReference type="HOGENOM" id="CLU_013299_0_4_6"/>
<dbReference type="OrthoDB" id="9764501at2"/>
<dbReference type="Proteomes" id="UP000001022">
    <property type="component" value="Chromosome"/>
</dbReference>
<dbReference type="GO" id="GO:0050660">
    <property type="term" value="F:flavin adenine dinucleotide binding"/>
    <property type="evidence" value="ECO:0007669"/>
    <property type="project" value="InterPro"/>
</dbReference>
<dbReference type="GO" id="GO:0010181">
    <property type="term" value="F:FMN binding"/>
    <property type="evidence" value="ECO:0007669"/>
    <property type="project" value="UniProtKB-UniRule"/>
</dbReference>
<dbReference type="GO" id="GO:0000049">
    <property type="term" value="F:tRNA binding"/>
    <property type="evidence" value="ECO:0007669"/>
    <property type="project" value="UniProtKB-UniRule"/>
</dbReference>
<dbReference type="GO" id="GO:0102262">
    <property type="term" value="F:tRNA-dihydrouridine16 synthase activity"/>
    <property type="evidence" value="ECO:0007669"/>
    <property type="project" value="RHEA"/>
</dbReference>
<dbReference type="CDD" id="cd02801">
    <property type="entry name" value="DUS_like_FMN"/>
    <property type="match status" value="1"/>
</dbReference>
<dbReference type="Gene3D" id="3.20.20.70">
    <property type="entry name" value="Aldolase class I"/>
    <property type="match status" value="1"/>
</dbReference>
<dbReference type="Gene3D" id="1.20.225.30">
    <property type="entry name" value="Dihydrouridine synthase, C-terminal recognition domain"/>
    <property type="match status" value="1"/>
</dbReference>
<dbReference type="HAMAP" id="MF_02043">
    <property type="entry name" value="DusC_subfam"/>
    <property type="match status" value="1"/>
</dbReference>
<dbReference type="InterPro" id="IPR013785">
    <property type="entry name" value="Aldolase_TIM"/>
</dbReference>
<dbReference type="InterPro" id="IPR035587">
    <property type="entry name" value="DUS-like_FMN-bd"/>
</dbReference>
<dbReference type="InterPro" id="IPR001269">
    <property type="entry name" value="DUS_fam"/>
</dbReference>
<dbReference type="InterPro" id="IPR032886">
    <property type="entry name" value="DusC"/>
</dbReference>
<dbReference type="InterPro" id="IPR042270">
    <property type="entry name" value="DusC_C"/>
</dbReference>
<dbReference type="InterPro" id="IPR018517">
    <property type="entry name" value="tRNA_hU_synthase_CS"/>
</dbReference>
<dbReference type="NCBIfam" id="NF007838">
    <property type="entry name" value="PRK10550.1"/>
    <property type="match status" value="1"/>
</dbReference>
<dbReference type="PANTHER" id="PTHR11082">
    <property type="entry name" value="TRNA-DIHYDROURIDINE SYNTHASE"/>
    <property type="match status" value="1"/>
</dbReference>
<dbReference type="PANTHER" id="PTHR11082:SF26">
    <property type="entry name" value="TRNA-DIHYDROURIDINE(16) SYNTHASE"/>
    <property type="match status" value="1"/>
</dbReference>
<dbReference type="Pfam" id="PF01207">
    <property type="entry name" value="Dus"/>
    <property type="match status" value="1"/>
</dbReference>
<dbReference type="PIRSF" id="PIRSF006621">
    <property type="entry name" value="Dus"/>
    <property type="match status" value="1"/>
</dbReference>
<dbReference type="SUPFAM" id="SSF51395">
    <property type="entry name" value="FMN-linked oxidoreductases"/>
    <property type="match status" value="1"/>
</dbReference>
<dbReference type="PROSITE" id="PS01136">
    <property type="entry name" value="UPF0034"/>
    <property type="match status" value="1"/>
</dbReference>
<organism>
    <name type="scientific">Haemophilus ducreyi (strain 35000HP / ATCC 700724)</name>
    <dbReference type="NCBI Taxonomy" id="233412"/>
    <lineage>
        <taxon>Bacteria</taxon>
        <taxon>Pseudomonadati</taxon>
        <taxon>Pseudomonadota</taxon>
        <taxon>Gammaproteobacteria</taxon>
        <taxon>Pasteurellales</taxon>
        <taxon>Pasteurellaceae</taxon>
        <taxon>Haemophilus</taxon>
    </lineage>
</organism>
<feature type="chain" id="PRO_0000162112" description="tRNA-dihydrouridine(16) synthase">
    <location>
        <begin position="1"/>
        <end position="325"/>
    </location>
</feature>
<feature type="active site" description="Proton donor" evidence="1">
    <location>
        <position position="103"/>
    </location>
</feature>
<feature type="binding site" evidence="1">
    <location>
        <begin position="12"/>
        <end position="14"/>
    </location>
    <ligand>
        <name>FMN</name>
        <dbReference type="ChEBI" id="CHEBI:58210"/>
    </ligand>
</feature>
<feature type="binding site" evidence="1">
    <location>
        <position position="73"/>
    </location>
    <ligand>
        <name>FMN</name>
        <dbReference type="ChEBI" id="CHEBI:58210"/>
    </ligand>
</feature>
<feature type="binding site" evidence="1">
    <location>
        <position position="144"/>
    </location>
    <ligand>
        <name>FMN</name>
        <dbReference type="ChEBI" id="CHEBI:58210"/>
    </ligand>
</feature>
<feature type="binding site" evidence="1">
    <location>
        <begin position="205"/>
        <end position="207"/>
    </location>
    <ligand>
        <name>FMN</name>
        <dbReference type="ChEBI" id="CHEBI:58210"/>
    </ligand>
</feature>
<feature type="binding site" evidence="1">
    <location>
        <begin position="229"/>
        <end position="230"/>
    </location>
    <ligand>
        <name>FMN</name>
        <dbReference type="ChEBI" id="CHEBI:58210"/>
    </ligand>
</feature>
<feature type="site" description="Interacts with tRNA; defines subfamily-specific binding signature" evidence="1">
    <location>
        <position position="40"/>
    </location>
</feature>
<feature type="site" description="Interacts with tRNA" evidence="1">
    <location>
        <position position="100"/>
    </location>
</feature>
<feature type="site" description="Interacts with tRNA" evidence="1">
    <location>
        <position position="181"/>
    </location>
</feature>
<feature type="site" description="Interacts with tRNA; defines subfamily-specific binding signature" evidence="1">
    <location>
        <position position="277"/>
    </location>
</feature>
<feature type="site" description="Interacts with tRNA; defines subfamily-specific binding signature" evidence="1">
    <location>
        <position position="279"/>
    </location>
</feature>
<feature type="site" description="Interacts with tRNA" evidence="1">
    <location>
        <position position="284"/>
    </location>
</feature>
<feature type="site" description="Interacts with tRNA" evidence="1">
    <location>
        <position position="300"/>
    </location>
</feature>
<comment type="function">
    <text evidence="1">Catalyzes the synthesis of 5,6-dihydrouridine (D), a modified base found in the D-loop of most tRNAs, via the reduction of the C5-C6 double bond in target uridines. Specifically modifies U16 in tRNAs.</text>
</comment>
<comment type="catalytic activity">
    <reaction evidence="1">
        <text>5,6-dihydrouridine(16) in tRNA + NADP(+) = uridine(16) in tRNA + NADPH + H(+)</text>
        <dbReference type="Rhea" id="RHEA:53376"/>
        <dbReference type="Rhea" id="RHEA-COMP:13543"/>
        <dbReference type="Rhea" id="RHEA-COMP:13544"/>
        <dbReference type="ChEBI" id="CHEBI:15378"/>
        <dbReference type="ChEBI" id="CHEBI:57783"/>
        <dbReference type="ChEBI" id="CHEBI:58349"/>
        <dbReference type="ChEBI" id="CHEBI:65315"/>
        <dbReference type="ChEBI" id="CHEBI:74443"/>
    </reaction>
</comment>
<comment type="catalytic activity">
    <reaction evidence="1">
        <text>5,6-dihydrouridine(16) in tRNA + NAD(+) = uridine(16) in tRNA + NADH + H(+)</text>
        <dbReference type="Rhea" id="RHEA:53380"/>
        <dbReference type="Rhea" id="RHEA-COMP:13543"/>
        <dbReference type="Rhea" id="RHEA-COMP:13544"/>
        <dbReference type="ChEBI" id="CHEBI:15378"/>
        <dbReference type="ChEBI" id="CHEBI:57540"/>
        <dbReference type="ChEBI" id="CHEBI:57945"/>
        <dbReference type="ChEBI" id="CHEBI:65315"/>
        <dbReference type="ChEBI" id="CHEBI:74443"/>
    </reaction>
</comment>
<comment type="cofactor">
    <cofactor evidence="1">
        <name>FMN</name>
        <dbReference type="ChEBI" id="CHEBI:58210"/>
    </cofactor>
</comment>
<comment type="similarity">
    <text evidence="1">Belongs to the Dus family. DusC subfamily.</text>
</comment>
<reference key="1">
    <citation type="submission" date="2003-06" db="EMBL/GenBank/DDBJ databases">
        <title>The complete genome sequence of Haemophilus ducreyi.</title>
        <authorList>
            <person name="Munson R.S. Jr."/>
            <person name="Ray W.C."/>
            <person name="Mahairas G."/>
            <person name="Sabo P."/>
            <person name="Mungur R."/>
            <person name="Johnson L."/>
            <person name="Nguyen D."/>
            <person name="Wang J."/>
            <person name="Forst C."/>
            <person name="Hood L."/>
        </authorList>
    </citation>
    <scope>NUCLEOTIDE SEQUENCE [LARGE SCALE GENOMIC DNA]</scope>
    <source>
        <strain>35000HP / ATCC 700724</strain>
    </source>
</reference>
<sequence length="325" mass="36471">MIKSIPRIMLAPMQGVLDPFMRKLLTAYNDYDLCVSEFVRVVDQRLPKKTFYRLAPELLQGGLTDSGTPIRVQLLGQYPQWLAENAQLAIELGSYGIDFNCGCPSKTVNGSHGGAALLKDPELIYCATKAIREAVPKAQPVSVKMRLGWDCASQCFEIADAIQQAGADEITVHGRTKQDGYRAERINWQAIGQIQQRLNIPVIANGEILDFNSAQKCREITACCGLMIGRGALNTPNLSKVIKYNVAKMAWSEVLQLLYEYVNMPNERDSGFYHVARIKQWLHYLDKAYPEAVDLFQIVKTEHSYDGVKAHIEKAVGRNEKTNFQ</sequence>
<evidence type="ECO:0000255" key="1">
    <source>
        <dbReference type="HAMAP-Rule" id="MF_02043"/>
    </source>
</evidence>
<name>DUSC_HAEDU</name>
<keyword id="KW-0285">Flavoprotein</keyword>
<keyword id="KW-0288">FMN</keyword>
<keyword id="KW-0521">NADP</keyword>
<keyword id="KW-0560">Oxidoreductase</keyword>
<keyword id="KW-1185">Reference proteome</keyword>
<keyword id="KW-0694">RNA-binding</keyword>
<keyword id="KW-0819">tRNA processing</keyword>
<keyword id="KW-0820">tRNA-binding</keyword>
<gene>
    <name evidence="1" type="primary">dusC</name>
    <name type="ordered locus">HD_1770</name>
</gene>
<protein>
    <recommendedName>
        <fullName evidence="1">tRNA-dihydrouridine(16) synthase</fullName>
        <ecNumber evidence="1">1.3.1.-</ecNumber>
    </recommendedName>
    <alternativeName>
        <fullName evidence="1">U16-specific dihydrouridine synthase</fullName>
        <shortName evidence="1">U16-specific Dus</shortName>
    </alternativeName>
    <alternativeName>
        <fullName evidence="1">tRNA-dihydrouridine synthase C</fullName>
    </alternativeName>
</protein>
<proteinExistence type="inferred from homology"/>